<comment type="function">
    <text evidence="1 7">Lamins are intermediate filament proteins that assemble into a filamentous meshwork, and which constitute the major components of the nuclear lamina, a fibrous layer on the nucleoplasmic side of the inner nuclear membrane (PubMed:22090348). Lamins provide a framework for the nuclear envelope, bridging the nuclear envelope and chromatin, thereby playing an important role in nuclear assembly, chromatin organization, nuclear membrane and telomere dynamics (By similarity). The structural integrity of the lamina is strictly controlled by the cell cycle, as seen by the disintegration and formation of the nuclear envelope in prophase and telophase, respectively (By similarity). Helps to maintain integrity of nuclear structures in response to mechanical stress (PubMed:22090348).</text>
</comment>
<comment type="subunit">
    <text evidence="1">Homodimer. Lamin dimers then assemble into dimeric head-to-tail polymers. Ultimately, two head-to-tail polymers assemble laterally into a protofilament with a uniformly shaped rod of 3.5 nm in diameter.</text>
</comment>
<comment type="subcellular location">
    <subcellularLocation>
        <location evidence="1">Nucleus lamina</location>
    </subcellularLocation>
    <subcellularLocation>
        <location evidence="6">Nucleus envelope</location>
    </subcellularLocation>
    <subcellularLocation>
        <location evidence="7">Nucleus inner membrane</location>
    </subcellularLocation>
</comment>
<comment type="disruption phenotype">
    <text evidence="7">Nuclei are misshapen and disorganized, with irregularly condensed chromatin and centrosomal detachment from nuclei.</text>
</comment>
<comment type="similarity">
    <text evidence="4">Belongs to the intermediate filament family.</text>
</comment>
<gene>
    <name evidence="11" type="primary">lmnB</name>
    <name evidence="12" type="ORF">DDB_G0289429</name>
</gene>
<name>LMNB1_DICDI</name>
<dbReference type="EMBL" id="AAFI02000140">
    <property type="protein sequence ID" value="EAL62742.1"/>
    <property type="molecule type" value="Genomic_DNA"/>
</dbReference>
<dbReference type="RefSeq" id="XP_636248.1">
    <property type="nucleotide sequence ID" value="XM_631156.1"/>
</dbReference>
<dbReference type="SMR" id="Q54HI5"/>
<dbReference type="FunCoup" id="Q54HI5">
    <property type="interactions" value="484"/>
</dbReference>
<dbReference type="STRING" id="44689.Q54HI5"/>
<dbReference type="PaxDb" id="44689-DDB0304833"/>
<dbReference type="EnsemblProtists" id="EAL62742">
    <property type="protein sequence ID" value="EAL62742"/>
    <property type="gene ID" value="DDB_G0289429"/>
</dbReference>
<dbReference type="GeneID" id="8627138"/>
<dbReference type="KEGG" id="ddi:DDB_G0289429"/>
<dbReference type="dictyBase" id="DDB_G0289429">
    <property type="gene designation" value="lmnB"/>
</dbReference>
<dbReference type="VEuPathDB" id="AmoebaDB:DDB_G0289429"/>
<dbReference type="eggNOG" id="ENOG502RE3N">
    <property type="taxonomic scope" value="Eukaryota"/>
</dbReference>
<dbReference type="HOGENOM" id="CLU_386089_0_0_1"/>
<dbReference type="InParanoid" id="Q54HI5"/>
<dbReference type="OMA" id="ENEFYWA"/>
<dbReference type="PhylomeDB" id="Q54HI5"/>
<dbReference type="PRO" id="PR:Q54HI5"/>
<dbReference type="Proteomes" id="UP000002195">
    <property type="component" value="Chromosome 5"/>
</dbReference>
<dbReference type="GO" id="GO:0005638">
    <property type="term" value="C:lamin filament"/>
    <property type="evidence" value="ECO:0000314"/>
    <property type="project" value="dictyBase"/>
</dbReference>
<dbReference type="GO" id="GO:0005635">
    <property type="term" value="C:nuclear envelope"/>
    <property type="evidence" value="ECO:0000314"/>
    <property type="project" value="dictyBase"/>
</dbReference>
<dbReference type="GO" id="GO:0005637">
    <property type="term" value="C:nuclear inner membrane"/>
    <property type="evidence" value="ECO:0000314"/>
    <property type="project" value="dictyBase"/>
</dbReference>
<dbReference type="GO" id="GO:0005652">
    <property type="term" value="C:nuclear lamina"/>
    <property type="evidence" value="ECO:0000314"/>
    <property type="project" value="dictyBase"/>
</dbReference>
<dbReference type="GO" id="GO:0030527">
    <property type="term" value="F:structural constituent of chromatin"/>
    <property type="evidence" value="ECO:0000315"/>
    <property type="project" value="dictyBase"/>
</dbReference>
<dbReference type="GO" id="GO:0007098">
    <property type="term" value="P:centrosome cycle"/>
    <property type="evidence" value="ECO:0000315"/>
    <property type="project" value="dictyBase"/>
</dbReference>
<dbReference type="GO" id="GO:0051642">
    <property type="term" value="P:centrosome localization"/>
    <property type="evidence" value="ECO:0000315"/>
    <property type="project" value="dictyBase"/>
</dbReference>
<dbReference type="GO" id="GO:0006325">
    <property type="term" value="P:chromatin organization"/>
    <property type="evidence" value="ECO:0000315"/>
    <property type="project" value="dictyBase"/>
</dbReference>
<dbReference type="InterPro" id="IPR039008">
    <property type="entry name" value="IF_rod_dom"/>
</dbReference>
<dbReference type="InterPro" id="IPR001322">
    <property type="entry name" value="Lamin_tail_dom"/>
</dbReference>
<dbReference type="InterPro" id="IPR036415">
    <property type="entry name" value="Lamin_tail_dom_sf"/>
</dbReference>
<dbReference type="InterPro" id="IPR052877">
    <property type="entry name" value="Lamin_tail_domain"/>
</dbReference>
<dbReference type="PANTHER" id="PTHR19956">
    <property type="entry name" value="LAMIN TAIL DOMAIN-CONTAINING PROTEIN 2"/>
    <property type="match status" value="1"/>
</dbReference>
<dbReference type="PANTHER" id="PTHR19956:SF5">
    <property type="entry name" value="LAMIN TAIL DOMAIN-CONTAINING PROTEIN 2"/>
    <property type="match status" value="1"/>
</dbReference>
<dbReference type="SUPFAM" id="SSF74853">
    <property type="entry name" value="Lamin A/C globular tail domain"/>
    <property type="match status" value="1"/>
</dbReference>
<dbReference type="PROSITE" id="PS51842">
    <property type="entry name" value="IF_ROD_2"/>
    <property type="match status" value="1"/>
</dbReference>
<dbReference type="PROSITE" id="PS51841">
    <property type="entry name" value="LTD"/>
    <property type="match status" value="1"/>
</dbReference>
<sequence>MDMSKKKSKRASPIESSQEEIAISTSKTATTEKPKKTKTTTKKKASQPSQEVVMETESEVEITTTTTSTSTTNNNNITTTSTSSQQSNGTLSSSSSPTIQSIPTTPISKYIPSLSQIGTPLSPNRAAQRLREKDELSLIHNRLKSALKKLESAETELEKKNQEYEELDQKHTATIKQLKQRSDQVEKQLIEEQNQNSDLTSNRNILENELKSKESVWKKEKDEILLKFQESINKLNQENSLAQSQLKSEIVSKEYEIDGLKSEINRLKDDLQYRIREGEEKSRKLLENEYNRFKGKEEEYNQLIVSKDEEIKKYKFELKEKEKSSNAMNKKENELNNLIQAHERQIEDMRDSINREWELKAAQMMEEHHARTIHLQQAVDSFNEEKERIKSQMETLNGQIEDINIKNNEYEDRIKEMNVLLSQKDNSIGELGVEIEESKKKMRKQMADLKSKDGQIALLQIEINTKDNKCNTLQTETNRLKSELYSITNQIDPEIPLDPEINSLKELVKGFEKTVDDRKRKRSKLQHEFNAAANQDQNGMTIEEQSSTSTTTTTSATGSSSSTSHLDNIDSSKLPTGPEQSELFNPDTVSFSLVDSNQEFIKLSVHGDMDNGLSISKWRLIVVKPDGSKSGFSFPDGIQPFKGIKSVTVWTGRPRPQGTPTENEFYWARTELWTSPVEGTIVKLVSPSEETTTVTLPADGIYQKPSSAGKSNCLIM</sequence>
<organism>
    <name type="scientific">Dictyostelium discoideum</name>
    <name type="common">Social amoeba</name>
    <dbReference type="NCBI Taxonomy" id="44689"/>
    <lineage>
        <taxon>Eukaryota</taxon>
        <taxon>Amoebozoa</taxon>
        <taxon>Evosea</taxon>
        <taxon>Eumycetozoa</taxon>
        <taxon>Dictyostelia</taxon>
        <taxon>Dictyosteliales</taxon>
        <taxon>Dictyosteliaceae</taxon>
        <taxon>Dictyostelium</taxon>
    </lineage>
</organism>
<protein>
    <recommendedName>
        <fullName evidence="11">Lamin-like protein</fullName>
    </recommendedName>
    <alternativeName>
        <fullName evidence="9">Protein NE81</fullName>
    </alternativeName>
</protein>
<reference key="1">
    <citation type="journal article" date="2005" name="Nature">
        <title>The genome of the social amoeba Dictyostelium discoideum.</title>
        <authorList>
            <person name="Eichinger L."/>
            <person name="Pachebat J.A."/>
            <person name="Gloeckner G."/>
            <person name="Rajandream M.A."/>
            <person name="Sucgang R."/>
            <person name="Berriman M."/>
            <person name="Song J."/>
            <person name="Olsen R."/>
            <person name="Szafranski K."/>
            <person name="Xu Q."/>
            <person name="Tunggal B."/>
            <person name="Kummerfeld S."/>
            <person name="Madera M."/>
            <person name="Konfortov B.A."/>
            <person name="Rivero F."/>
            <person name="Bankier A.T."/>
            <person name="Lehmann R."/>
            <person name="Hamlin N."/>
            <person name="Davies R."/>
            <person name="Gaudet P."/>
            <person name="Fey P."/>
            <person name="Pilcher K."/>
            <person name="Chen G."/>
            <person name="Saunders D."/>
            <person name="Sodergren E.J."/>
            <person name="Davis P."/>
            <person name="Kerhornou A."/>
            <person name="Nie X."/>
            <person name="Hall N."/>
            <person name="Anjard C."/>
            <person name="Hemphill L."/>
            <person name="Bason N."/>
            <person name="Farbrother P."/>
            <person name="Desany B."/>
            <person name="Just E."/>
            <person name="Morio T."/>
            <person name="Rost R."/>
            <person name="Churcher C.M."/>
            <person name="Cooper J."/>
            <person name="Haydock S."/>
            <person name="van Driessche N."/>
            <person name="Cronin A."/>
            <person name="Goodhead I."/>
            <person name="Muzny D.M."/>
            <person name="Mourier T."/>
            <person name="Pain A."/>
            <person name="Lu M."/>
            <person name="Harper D."/>
            <person name="Lindsay R."/>
            <person name="Hauser H."/>
            <person name="James K.D."/>
            <person name="Quiles M."/>
            <person name="Madan Babu M."/>
            <person name="Saito T."/>
            <person name="Buchrieser C."/>
            <person name="Wardroper A."/>
            <person name="Felder M."/>
            <person name="Thangavelu M."/>
            <person name="Johnson D."/>
            <person name="Knights A."/>
            <person name="Loulseged H."/>
            <person name="Mungall K.L."/>
            <person name="Oliver K."/>
            <person name="Price C."/>
            <person name="Quail M.A."/>
            <person name="Urushihara H."/>
            <person name="Hernandez J."/>
            <person name="Rabbinowitsch E."/>
            <person name="Steffen D."/>
            <person name="Sanders M."/>
            <person name="Ma J."/>
            <person name="Kohara Y."/>
            <person name="Sharp S."/>
            <person name="Simmonds M.N."/>
            <person name="Spiegler S."/>
            <person name="Tivey A."/>
            <person name="Sugano S."/>
            <person name="White B."/>
            <person name="Walker D."/>
            <person name="Woodward J.R."/>
            <person name="Winckler T."/>
            <person name="Tanaka Y."/>
            <person name="Shaulsky G."/>
            <person name="Schleicher M."/>
            <person name="Weinstock G.M."/>
            <person name="Rosenthal A."/>
            <person name="Cox E.C."/>
            <person name="Chisholm R.L."/>
            <person name="Gibbs R.A."/>
            <person name="Loomis W.F."/>
            <person name="Platzer M."/>
            <person name="Kay R.R."/>
            <person name="Williams J.G."/>
            <person name="Dear P.H."/>
            <person name="Noegel A.A."/>
            <person name="Barrell B.G."/>
            <person name="Kuspa A."/>
        </authorList>
    </citation>
    <scope>NUCLEOTIDE SEQUENCE [LARGE SCALE GENOMIC DNA]</scope>
    <source>
        <strain>AX4</strain>
    </source>
</reference>
<reference evidence="10" key="2">
    <citation type="journal article" date="2009" name="Cell Motil. Cytoskeleton">
        <title>Identification and cell cycle-dependent localization of nine novel, genuine centrosomal components in Dictyostelium discoideum.</title>
        <authorList>
            <person name="Schulz I."/>
            <person name="Erle A."/>
            <person name="Graf R."/>
            <person name="Kruger A."/>
            <person name="Lohmeier H."/>
            <person name="Putzler S."/>
            <person name="Samereier M."/>
            <person name="Weidenthaler S."/>
        </authorList>
    </citation>
    <scope>SUBCELLULAR LOCATION</scope>
    <source>
        <strain evidence="8">AX2</strain>
    </source>
</reference>
<reference evidence="10" key="3">
    <citation type="journal article" date="2012" name="Mol. Biol. Cell">
        <title>Characterization of NE81, the first lamin-like nucleoskeleton protein in a unicellular organism.</title>
        <authorList>
            <person name="Krueger A."/>
            <person name="Batsios P."/>
            <person name="Baumann O."/>
            <person name="Luckert E."/>
            <person name="Schwarz H."/>
            <person name="Stick R."/>
            <person name="Meyer I."/>
            <person name="Graef R."/>
        </authorList>
    </citation>
    <scope>FUNCTION</scope>
    <scope>SUBCELLULAR LOCATION</scope>
    <scope>DISRUPTION PHENOTYPE</scope>
    <scope>MUTAGENESIS OF SER-122 AND 713-CYS--MET-716</scope>
    <scope>NUCLEAR LOCALIZATION SIGNAL</scope>
    <source>
        <strain evidence="9">AX2</strain>
    </source>
</reference>
<evidence type="ECO:0000250" key="1">
    <source>
        <dbReference type="UniProtKB" id="P14733"/>
    </source>
</evidence>
<evidence type="ECO:0000255" key="2"/>
<evidence type="ECO:0000255" key="3">
    <source>
        <dbReference type="PROSITE-ProRule" id="PRU01187"/>
    </source>
</evidence>
<evidence type="ECO:0000255" key="4">
    <source>
        <dbReference type="PROSITE-ProRule" id="PRU01188"/>
    </source>
</evidence>
<evidence type="ECO:0000256" key="5">
    <source>
        <dbReference type="SAM" id="MobiDB-lite"/>
    </source>
</evidence>
<evidence type="ECO:0000269" key="6">
    <source>
    </source>
</evidence>
<evidence type="ECO:0000269" key="7">
    <source>
    </source>
</evidence>
<evidence type="ECO:0000303" key="8">
    <source>
    </source>
</evidence>
<evidence type="ECO:0000303" key="9">
    <source>
    </source>
</evidence>
<evidence type="ECO:0000305" key="10"/>
<evidence type="ECO:0000312" key="11">
    <source>
        <dbReference type="dictyBase" id="DDB_G0289429"/>
    </source>
</evidence>
<evidence type="ECO:0000312" key="12">
    <source>
        <dbReference type="EMBL" id="EAL62742.1"/>
    </source>
</evidence>
<accession>Q54HI5</accession>
<proteinExistence type="evidence at protein level"/>
<keyword id="KW-0175">Coiled coil</keyword>
<keyword id="KW-0403">Intermediate filament</keyword>
<keyword id="KW-0472">Membrane</keyword>
<keyword id="KW-0539">Nucleus</keyword>
<keyword id="KW-1185">Reference proteome</keyword>
<feature type="chain" id="PRO_0000430572" description="Lamin-like protein" evidence="10">
    <location>
        <begin position="1"/>
        <end position="716"/>
    </location>
</feature>
<feature type="domain" description="IF rod" evidence="4">
    <location>
        <begin position="132"/>
        <end position="515"/>
    </location>
</feature>
<feature type="domain" description="LTD" evidence="3">
    <location>
        <begin position="575"/>
        <end position="698"/>
    </location>
</feature>
<feature type="region of interest" description="Disordered" evidence="5">
    <location>
        <begin position="1"/>
        <end position="107"/>
    </location>
</feature>
<feature type="region of interest" description="Disordered" evidence="5">
    <location>
        <begin position="519"/>
        <end position="584"/>
    </location>
</feature>
<feature type="coiled-coil region" evidence="2">
    <location>
        <begin position="130"/>
        <end position="450"/>
    </location>
</feature>
<feature type="short sequence motif" description="Nuclear localization signal" evidence="7">
    <location>
        <begin position="519"/>
        <end position="522"/>
    </location>
</feature>
<feature type="short sequence motif" description="CAAX motif" evidence="9">
    <location>
        <begin position="713"/>
        <end position="716"/>
    </location>
</feature>
<feature type="compositionally biased region" description="Basic residues" evidence="5">
    <location>
        <begin position="1"/>
        <end position="10"/>
    </location>
</feature>
<feature type="compositionally biased region" description="Basic residues" evidence="5">
    <location>
        <begin position="35"/>
        <end position="45"/>
    </location>
</feature>
<feature type="compositionally biased region" description="Low complexity" evidence="5">
    <location>
        <begin position="62"/>
        <end position="107"/>
    </location>
</feature>
<feature type="compositionally biased region" description="Polar residues" evidence="5">
    <location>
        <begin position="532"/>
        <end position="545"/>
    </location>
</feature>
<feature type="compositionally biased region" description="Low complexity" evidence="5">
    <location>
        <begin position="546"/>
        <end position="564"/>
    </location>
</feature>
<feature type="compositionally biased region" description="Polar residues" evidence="5">
    <location>
        <begin position="565"/>
        <end position="584"/>
    </location>
</feature>
<feature type="mutagenesis site" description="Fails to localize to the nuclear envelope, and instead forms nuclear aggregates which persist throughout mitosis; when associated with deletion of 713-C--M-716." evidence="7">
    <original>S</original>
    <variation>A</variation>
    <location>
        <position position="122"/>
    </location>
</feature>
<feature type="mutagenesis site" description="Fails to localize to the nuclear envelope, and instead forms nuclear aggregates which disperse at the onset of mitosis. Forms nuclear aggregates which persist throughout mitosis; when associated with S-122." evidence="7">
    <location>
        <begin position="713"/>
        <end position="716"/>
    </location>
</feature>